<evidence type="ECO:0000250" key="1"/>
<evidence type="ECO:0000250" key="2">
    <source>
        <dbReference type="UniProtKB" id="P00692"/>
    </source>
</evidence>
<evidence type="ECO:0000250" key="3">
    <source>
        <dbReference type="UniProtKB" id="P06278"/>
    </source>
</evidence>
<evidence type="ECO:0000269" key="4">
    <source>
    </source>
</evidence>
<evidence type="ECO:0000305" key="5"/>
<evidence type="ECO:0007829" key="6">
    <source>
        <dbReference type="PDB" id="1WP6"/>
    </source>
</evidence>
<evidence type="ECO:0007829" key="7">
    <source>
        <dbReference type="PDB" id="1WPC"/>
    </source>
</evidence>
<evidence type="ECO:0007829" key="8">
    <source>
        <dbReference type="PDB" id="2GJP"/>
    </source>
</evidence>
<sequence length="518" mass="59009">MKMRTGKKGFLSILLAFLLVITSIPFTLVDVEAHHNGTNGTMMQYFEWYLPNDGNHWNRLNSDASNLKSKGITAVWIPPAWKGASQNDVGYGAYDLYDLGEFNQKGTVRTKYGTRSQLQAAVTSLKNNGIQVYGDVVMNHKGGADATEMVRAVEVNPNNRNQEVTGEYTIEAWTRFDFPGRGNTHSSFKWRWYHFDGVDWDQSRRLNNRIYKFRGHGKAWDWEVDTENGNYDYLMYADIDMDHPEVVNELRNWGVWYTNTLGLDGFRIDAVKHIKYSFTRDWINHVRSATGKNMFAVAEFWKNDLGAIENYLQKTNWNHSVFDVPLHYNLYNASKSGGNYDMRNIFNGTVVQRHPSHAVTFVDNHDSQPEEALESFVEEWFKPLAYALTLTREQGYPSVFYGDYYGIPTHGVPAMRSKIDPILEARQKYAYGKQNDYLDHHNIIGWTREGNTAHPNSGLATIMSDGAGGSKWMFVGRNKAGQVWSDITGNRTGTVTINADGWGNFSVNGGSVSIWVNK</sequence>
<name>AMT6_BACS7</name>
<protein>
    <recommendedName>
        <fullName>Glucan 1,4-alpha-maltohexaosidase</fullName>
        <ecNumber evidence="3">3.2.1.98</ecNumber>
    </recommendedName>
    <alternativeName>
        <fullName>Exo-maltohexaohydrolase</fullName>
    </alternativeName>
    <alternativeName>
        <fullName>G6-amylase</fullName>
    </alternativeName>
    <alternativeName>
        <fullName>Maltohexaose-producing amylase</fullName>
    </alternativeName>
</protein>
<feature type="signal peptide" evidence="4">
    <location>
        <begin position="1"/>
        <end position="33"/>
    </location>
</feature>
<feature type="chain" id="PRO_0000001421" description="Glucan 1,4-alpha-maltohexaosidase">
    <location>
        <begin position="34"/>
        <end position="518"/>
    </location>
</feature>
<feature type="active site" description="Nucleophile" evidence="1">
    <location>
        <position position="269"/>
    </location>
</feature>
<feature type="active site" description="Proton donor" evidence="1">
    <location>
        <position position="299"/>
    </location>
</feature>
<feature type="binding site" evidence="2">
    <location>
        <position position="139"/>
    </location>
    <ligand>
        <name>Ca(2+)</name>
        <dbReference type="ChEBI" id="CHEBI:29108"/>
        <label>1</label>
    </ligand>
</feature>
<feature type="binding site" evidence="2">
    <location>
        <position position="196"/>
    </location>
    <ligand>
        <name>Ca(2+)</name>
        <dbReference type="ChEBI" id="CHEBI:29108"/>
        <label>2</label>
    </ligand>
</feature>
<feature type="binding site" evidence="2">
    <location>
        <position position="196"/>
    </location>
    <ligand>
        <name>Na(+)</name>
        <dbReference type="ChEBI" id="CHEBI:29101"/>
    </ligand>
</feature>
<feature type="binding site" evidence="2">
    <location>
        <position position="219"/>
    </location>
    <ligand>
        <name>Ca(2+)</name>
        <dbReference type="ChEBI" id="CHEBI:29108"/>
        <label>2</label>
    </ligand>
</feature>
<feature type="binding site" evidence="2">
    <location>
        <position position="221"/>
    </location>
    <ligand>
        <name>Ca(2+)</name>
        <dbReference type="ChEBI" id="CHEBI:29108"/>
        <label>2</label>
    </ligand>
</feature>
<feature type="binding site" evidence="2">
    <location>
        <position position="221"/>
    </location>
    <ligand>
        <name>Na(+)</name>
        <dbReference type="ChEBI" id="CHEBI:29101"/>
    </ligand>
</feature>
<feature type="binding site" evidence="2">
    <location>
        <position position="232"/>
    </location>
    <ligand>
        <name>Ca(2+)</name>
        <dbReference type="ChEBI" id="CHEBI:29108"/>
        <label>1</label>
    </ligand>
</feature>
<feature type="binding site" evidence="2">
    <location>
        <position position="232"/>
    </location>
    <ligand>
        <name>Na(+)</name>
        <dbReference type="ChEBI" id="CHEBI:29101"/>
    </ligand>
</feature>
<feature type="binding site" evidence="2">
    <location>
        <position position="238"/>
    </location>
    <ligand>
        <name>Ca(2+)</name>
        <dbReference type="ChEBI" id="CHEBI:29108"/>
        <label>1</label>
    </ligand>
</feature>
<feature type="binding site" evidence="2">
    <location>
        <position position="238"/>
    </location>
    <ligand>
        <name>Na(+)</name>
        <dbReference type="ChEBI" id="CHEBI:29101"/>
    </ligand>
</feature>
<feature type="binding site" evidence="2">
    <location>
        <position position="240"/>
    </location>
    <ligand>
        <name>Ca(2+)</name>
        <dbReference type="ChEBI" id="CHEBI:29108"/>
        <label>2</label>
    </ligand>
</feature>
<feature type="binding site" evidence="2">
    <location>
        <position position="242"/>
    </location>
    <ligand>
        <name>Ca(2+)</name>
        <dbReference type="ChEBI" id="CHEBI:29108"/>
        <label>2</label>
    </ligand>
</feature>
<feature type="binding site" evidence="2">
    <location>
        <position position="273"/>
    </location>
    <ligand>
        <name>Ca(2+)</name>
        <dbReference type="ChEBI" id="CHEBI:29108"/>
        <label>1</label>
    </ligand>
</feature>
<feature type="site" description="Transition state stabilizer" evidence="1">
    <location>
        <position position="366"/>
    </location>
</feature>
<feature type="strand" evidence="7">
    <location>
        <begin position="42"/>
        <end position="44"/>
    </location>
</feature>
<feature type="strand" evidence="7">
    <location>
        <begin position="52"/>
        <end position="54"/>
    </location>
</feature>
<feature type="helix" evidence="7">
    <location>
        <begin position="56"/>
        <end position="70"/>
    </location>
</feature>
<feature type="strand" evidence="7">
    <location>
        <begin position="74"/>
        <end position="77"/>
    </location>
</feature>
<feature type="strand" evidence="7">
    <location>
        <begin position="81"/>
        <end position="85"/>
    </location>
</feature>
<feature type="strand" evidence="7">
    <location>
        <begin position="92"/>
        <end position="95"/>
    </location>
</feature>
<feature type="strand" evidence="7">
    <location>
        <begin position="107"/>
        <end position="109"/>
    </location>
</feature>
<feature type="helix" evidence="7">
    <location>
        <begin position="115"/>
        <end position="127"/>
    </location>
</feature>
<feature type="strand" evidence="7">
    <location>
        <begin position="131"/>
        <end position="136"/>
    </location>
</feature>
<feature type="strand" evidence="7">
    <location>
        <begin position="139"/>
        <end position="141"/>
    </location>
</feature>
<feature type="strand" evidence="7">
    <location>
        <begin position="145"/>
        <end position="156"/>
    </location>
</feature>
<feature type="strand" evidence="7">
    <location>
        <begin position="159"/>
        <end position="163"/>
    </location>
</feature>
<feature type="strand" evidence="7">
    <location>
        <begin position="168"/>
        <end position="176"/>
    </location>
</feature>
<feature type="turn" evidence="7">
    <location>
        <begin position="179"/>
        <end position="183"/>
    </location>
</feature>
<feature type="helix" evidence="7">
    <location>
        <begin position="192"/>
        <end position="194"/>
    </location>
</feature>
<feature type="strand" evidence="7">
    <location>
        <begin position="195"/>
        <end position="199"/>
    </location>
</feature>
<feature type="turn" evidence="7">
    <location>
        <begin position="202"/>
        <end position="204"/>
    </location>
</feature>
<feature type="strand" evidence="7">
    <location>
        <begin position="210"/>
        <end position="213"/>
    </location>
</feature>
<feature type="strand" evidence="8">
    <location>
        <begin position="222"/>
        <end position="224"/>
    </location>
</feature>
<feature type="strand" evidence="7">
    <location>
        <begin position="235"/>
        <end position="239"/>
    </location>
</feature>
<feature type="helix" evidence="7">
    <location>
        <begin position="244"/>
        <end position="261"/>
    </location>
</feature>
<feature type="strand" evidence="7">
    <location>
        <begin position="264"/>
        <end position="268"/>
    </location>
</feature>
<feature type="helix" evidence="7">
    <location>
        <begin position="271"/>
        <end position="273"/>
    </location>
</feature>
<feature type="helix" evidence="7">
    <location>
        <begin position="276"/>
        <end position="290"/>
    </location>
</feature>
<feature type="strand" evidence="7">
    <location>
        <begin position="295"/>
        <end position="298"/>
    </location>
</feature>
<feature type="helix" evidence="7">
    <location>
        <begin position="305"/>
        <end position="314"/>
    </location>
</feature>
<feature type="turn" evidence="7">
    <location>
        <begin position="315"/>
        <end position="317"/>
    </location>
</feature>
<feature type="strand" evidence="7">
    <location>
        <begin position="319"/>
        <end position="322"/>
    </location>
</feature>
<feature type="helix" evidence="7">
    <location>
        <begin position="324"/>
        <end position="334"/>
    </location>
</feature>
<feature type="turn" evidence="7">
    <location>
        <begin position="335"/>
        <end position="338"/>
    </location>
</feature>
<feature type="helix" evidence="7">
    <location>
        <begin position="342"/>
        <end position="344"/>
    </location>
</feature>
<feature type="turn" evidence="7">
    <location>
        <begin position="345"/>
        <end position="348"/>
    </location>
</feature>
<feature type="helix" evidence="7">
    <location>
        <begin position="350"/>
        <end position="353"/>
    </location>
</feature>
<feature type="helix" evidence="7">
    <location>
        <begin position="355"/>
        <end position="357"/>
    </location>
</feature>
<feature type="strand" evidence="7">
    <location>
        <begin position="358"/>
        <end position="360"/>
    </location>
</feature>
<feature type="turn" evidence="7">
    <location>
        <begin position="365"/>
        <end position="367"/>
    </location>
</feature>
<feature type="strand" evidence="6">
    <location>
        <begin position="368"/>
        <end position="371"/>
    </location>
</feature>
<feature type="turn" evidence="7">
    <location>
        <begin position="379"/>
        <end position="381"/>
    </location>
</feature>
<feature type="helix" evidence="7">
    <location>
        <begin position="382"/>
        <end position="390"/>
    </location>
</feature>
<feature type="strand" evidence="7">
    <location>
        <begin position="391"/>
        <end position="400"/>
    </location>
</feature>
<feature type="helix" evidence="7">
    <location>
        <begin position="401"/>
        <end position="405"/>
    </location>
</feature>
<feature type="helix" evidence="7">
    <location>
        <begin position="408"/>
        <end position="410"/>
    </location>
</feature>
<feature type="helix" evidence="7">
    <location>
        <begin position="416"/>
        <end position="428"/>
    </location>
</feature>
<feature type="strand" evidence="7">
    <location>
        <begin position="434"/>
        <end position="437"/>
    </location>
</feature>
<feature type="strand" evidence="7">
    <location>
        <begin position="440"/>
        <end position="448"/>
    </location>
</feature>
<feature type="strand" evidence="7">
    <location>
        <begin position="459"/>
        <end position="467"/>
    </location>
</feature>
<feature type="strand" evidence="7">
    <location>
        <begin position="469"/>
        <end position="474"/>
    </location>
</feature>
<feature type="helix" evidence="7">
    <location>
        <begin position="477"/>
        <end position="479"/>
    </location>
</feature>
<feature type="strand" evidence="7">
    <location>
        <begin position="483"/>
        <end position="486"/>
    </location>
</feature>
<feature type="strand" evidence="7">
    <location>
        <begin position="489"/>
        <end position="491"/>
    </location>
</feature>
<feature type="strand" evidence="7">
    <location>
        <begin position="493"/>
        <end position="496"/>
    </location>
</feature>
<feature type="strand" evidence="7">
    <location>
        <begin position="501"/>
        <end position="507"/>
    </location>
</feature>
<feature type="strand" evidence="7">
    <location>
        <begin position="511"/>
        <end position="516"/>
    </location>
</feature>
<comment type="catalytic activity">
    <reaction evidence="3">
        <text>Hydrolysis of (1-&gt;4)-alpha-D-glucosidic linkages in amylaceous polysaccharides, to remove successive maltohexaose residues from the non-reducing chain ends.</text>
        <dbReference type="EC" id="3.2.1.98"/>
    </reaction>
</comment>
<comment type="cofactor">
    <cofactor evidence="3">
        <name>Ca(2+)</name>
        <dbReference type="ChEBI" id="CHEBI:29108"/>
    </cofactor>
    <text evidence="3">Binds 2 calcium ions per subunit.</text>
</comment>
<comment type="cofactor">
    <cofactor evidence="3">
        <name>Na(+)</name>
        <dbReference type="ChEBI" id="CHEBI:29101"/>
    </cofactor>
    <text evidence="3">Binds 1 sodium ion per subunit.</text>
</comment>
<comment type="pathway">
    <text>Glycan degradation; starch degradation.</text>
</comment>
<comment type="subcellular location">
    <subcellularLocation>
        <location>Secreted</location>
    </subcellularLocation>
</comment>
<comment type="similarity">
    <text evidence="5">Belongs to the glycosyl hydrolase 13 family.</text>
</comment>
<accession>P19571</accession>
<reference key="1">
    <citation type="journal article" date="1988" name="Biochem. Biophys. Res. Commun.">
        <title>Nucleotide sequence of the maltohexaose-producing amylase gene from an alkalophilic Bacillus sp. #707 and structural similarity to liquefying type alpha-amylases.</title>
        <authorList>
            <person name="Tsukamoto A."/>
            <person name="Kimura K."/>
            <person name="Ishii Y."/>
            <person name="Takano T."/>
            <person name="Yamane K."/>
        </authorList>
    </citation>
    <scope>NUCLEOTIDE SEQUENCE [GENOMIC DNA]</scope>
    <scope>PROTEIN SEQUENCE OF 34-36</scope>
</reference>
<dbReference type="EC" id="3.2.1.98" evidence="3"/>
<dbReference type="EMBL" id="M18862">
    <property type="protein sequence ID" value="AAA22231.1"/>
    <property type="molecule type" value="Genomic_DNA"/>
</dbReference>
<dbReference type="PIR" id="A27705">
    <property type="entry name" value="A27705"/>
</dbReference>
<dbReference type="PDB" id="1WP6">
    <property type="method" value="X-ray"/>
    <property type="resolution" value="2.10 A"/>
    <property type="chains" value="A=34-518"/>
</dbReference>
<dbReference type="PDB" id="1WPC">
    <property type="method" value="X-ray"/>
    <property type="resolution" value="1.90 A"/>
    <property type="chains" value="A=34-518"/>
</dbReference>
<dbReference type="PDB" id="2D3L">
    <property type="method" value="X-ray"/>
    <property type="resolution" value="2.30 A"/>
    <property type="chains" value="A=34-518"/>
</dbReference>
<dbReference type="PDB" id="2D3N">
    <property type="method" value="X-ray"/>
    <property type="resolution" value="1.90 A"/>
    <property type="chains" value="A=34-518"/>
</dbReference>
<dbReference type="PDB" id="2GJP">
    <property type="method" value="X-ray"/>
    <property type="resolution" value="1.90 A"/>
    <property type="chains" value="A=34-516"/>
</dbReference>
<dbReference type="PDB" id="2GJR">
    <property type="method" value="X-ray"/>
    <property type="resolution" value="2.10 A"/>
    <property type="chains" value="A=34-516"/>
</dbReference>
<dbReference type="PDBsum" id="1WP6"/>
<dbReference type="PDBsum" id="1WPC"/>
<dbReference type="PDBsum" id="2D3L"/>
<dbReference type="PDBsum" id="2D3N"/>
<dbReference type="PDBsum" id="2GJP"/>
<dbReference type="PDBsum" id="2GJR"/>
<dbReference type="SMR" id="P19571"/>
<dbReference type="DrugBank" id="DB01841">
    <property type="generic name" value="4,6-Dideoxyglucose"/>
</dbReference>
<dbReference type="DrugBank" id="DB02120">
    <property type="generic name" value="6-Amino-4-Hydroxymethyl-Cyclohex-4-Ene-1,2,3-Triol"/>
</dbReference>
<dbReference type="DrugBank" id="DB02379">
    <property type="generic name" value="Beta-D-Glucose"/>
</dbReference>
<dbReference type="CAZy" id="GH13">
    <property type="family name" value="Glycoside Hydrolase Family 13"/>
</dbReference>
<dbReference type="BRENDA" id="3.2.1.98">
    <property type="organism ID" value="691"/>
</dbReference>
<dbReference type="UniPathway" id="UPA00153"/>
<dbReference type="EvolutionaryTrace" id="P19571"/>
<dbReference type="GO" id="GO:0005576">
    <property type="term" value="C:extracellular region"/>
    <property type="evidence" value="ECO:0007669"/>
    <property type="project" value="UniProtKB-SubCell"/>
</dbReference>
<dbReference type="GO" id="GO:0004556">
    <property type="term" value="F:alpha-amylase activity"/>
    <property type="evidence" value="ECO:0007669"/>
    <property type="project" value="InterPro"/>
</dbReference>
<dbReference type="GO" id="GO:0005509">
    <property type="term" value="F:calcium ion binding"/>
    <property type="evidence" value="ECO:0007669"/>
    <property type="project" value="InterPro"/>
</dbReference>
<dbReference type="GO" id="GO:0033927">
    <property type="term" value="F:glucan 1,4-alpha-maltohexaosidase activity"/>
    <property type="evidence" value="ECO:0007669"/>
    <property type="project" value="UniProtKB-EC"/>
</dbReference>
<dbReference type="GO" id="GO:0005983">
    <property type="term" value="P:starch catabolic process"/>
    <property type="evidence" value="ECO:0007669"/>
    <property type="project" value="UniProtKB-UniPathway"/>
</dbReference>
<dbReference type="CDD" id="cd11318">
    <property type="entry name" value="AmyAc_bac_fung_AmyA"/>
    <property type="match status" value="1"/>
</dbReference>
<dbReference type="FunFam" id="2.40.30.140:FF:000002">
    <property type="entry name" value="Alpha-amylase"/>
    <property type="match status" value="1"/>
</dbReference>
<dbReference type="Gene3D" id="2.40.30.140">
    <property type="match status" value="1"/>
</dbReference>
<dbReference type="Gene3D" id="3.20.20.80">
    <property type="entry name" value="Glycosidases"/>
    <property type="match status" value="1"/>
</dbReference>
<dbReference type="Gene3D" id="2.60.40.1180">
    <property type="entry name" value="Golgi alpha-mannosidase II"/>
    <property type="match status" value="1"/>
</dbReference>
<dbReference type="InterPro" id="IPR013776">
    <property type="entry name" value="A-amylase_thermo"/>
</dbReference>
<dbReference type="InterPro" id="IPR015237">
    <property type="entry name" value="Alpha-amylase_C_pro"/>
</dbReference>
<dbReference type="InterPro" id="IPR006046">
    <property type="entry name" value="Alpha_amylase"/>
</dbReference>
<dbReference type="InterPro" id="IPR006047">
    <property type="entry name" value="Glyco_hydro_13_cat_dom"/>
</dbReference>
<dbReference type="InterPro" id="IPR013780">
    <property type="entry name" value="Glyco_hydro_b"/>
</dbReference>
<dbReference type="InterPro" id="IPR017853">
    <property type="entry name" value="Glycoside_hydrolase_SF"/>
</dbReference>
<dbReference type="NCBIfam" id="NF006968">
    <property type="entry name" value="PRK09441.1-1"/>
    <property type="match status" value="1"/>
</dbReference>
<dbReference type="NCBIfam" id="NF006969">
    <property type="entry name" value="PRK09441.1-2"/>
    <property type="match status" value="1"/>
</dbReference>
<dbReference type="NCBIfam" id="NF006972">
    <property type="entry name" value="PRK09441.1-5"/>
    <property type="match status" value="1"/>
</dbReference>
<dbReference type="PANTHER" id="PTHR43447">
    <property type="entry name" value="ALPHA-AMYLASE"/>
    <property type="match status" value="1"/>
</dbReference>
<dbReference type="Pfam" id="PF09154">
    <property type="entry name" value="Alpha-amy_C_pro"/>
    <property type="match status" value="1"/>
</dbReference>
<dbReference type="Pfam" id="PF00128">
    <property type="entry name" value="Alpha-amylase"/>
    <property type="match status" value="1"/>
</dbReference>
<dbReference type="PIRSF" id="PIRSF001021">
    <property type="entry name" value="Alph-amls_thrmst"/>
    <property type="match status" value="1"/>
</dbReference>
<dbReference type="PRINTS" id="PR00110">
    <property type="entry name" value="ALPHAAMYLASE"/>
</dbReference>
<dbReference type="SMART" id="SM00642">
    <property type="entry name" value="Aamy"/>
    <property type="match status" value="1"/>
</dbReference>
<dbReference type="SUPFAM" id="SSF51445">
    <property type="entry name" value="(Trans)glycosidases"/>
    <property type="match status" value="1"/>
</dbReference>
<dbReference type="SUPFAM" id="SSF51011">
    <property type="entry name" value="Glycosyl hydrolase domain"/>
    <property type="match status" value="1"/>
</dbReference>
<proteinExistence type="evidence at protein level"/>
<organism>
    <name type="scientific">Bacillus sp. (strain 707)</name>
    <dbReference type="NCBI Taxonomy" id="1416"/>
    <lineage>
        <taxon>Bacteria</taxon>
        <taxon>Bacillati</taxon>
        <taxon>Bacillota</taxon>
        <taxon>Bacilli</taxon>
        <taxon>Bacillales</taxon>
        <taxon>Bacillaceae</taxon>
        <taxon>Bacillus</taxon>
    </lineage>
</organism>
<keyword id="KW-0002">3D-structure</keyword>
<keyword id="KW-0119">Carbohydrate metabolism</keyword>
<keyword id="KW-0903">Direct protein sequencing</keyword>
<keyword id="KW-0326">Glycosidase</keyword>
<keyword id="KW-0378">Hydrolase</keyword>
<keyword id="KW-0479">Metal-binding</keyword>
<keyword id="KW-0964">Secreted</keyword>
<keyword id="KW-0732">Signal</keyword>